<name>SEM1_SCHPO</name>
<evidence type="ECO:0000256" key="1">
    <source>
        <dbReference type="SAM" id="MobiDB-lite"/>
    </source>
</evidence>
<evidence type="ECO:0000269" key="2">
    <source>
    </source>
</evidence>
<evidence type="ECO:0000269" key="3">
    <source>
    </source>
</evidence>
<evidence type="ECO:0000269" key="4">
    <source>
    </source>
</evidence>
<evidence type="ECO:0000269" key="5">
    <source>
    </source>
</evidence>
<evidence type="ECO:0000269" key="6">
    <source>
    </source>
</evidence>
<evidence type="ECO:0000303" key="7">
    <source>
    </source>
</evidence>
<evidence type="ECO:0000305" key="8"/>
<evidence type="ECO:0000305" key="9">
    <source>
    </source>
</evidence>
<evidence type="ECO:0000312" key="10">
    <source>
        <dbReference type="PomBase" id="SPAC3G6.02"/>
    </source>
</evidence>
<reference key="1">
    <citation type="journal article" date="2002" name="Nature">
        <title>The genome sequence of Schizosaccharomyces pombe.</title>
        <authorList>
            <person name="Wood V."/>
            <person name="Gwilliam R."/>
            <person name="Rajandream M.A."/>
            <person name="Lyne M.H."/>
            <person name="Lyne R."/>
            <person name="Stewart A."/>
            <person name="Sgouros J.G."/>
            <person name="Peat N."/>
            <person name="Hayles J."/>
            <person name="Baker S.G."/>
            <person name="Basham D."/>
            <person name="Bowman S."/>
            <person name="Brooks K."/>
            <person name="Brown D."/>
            <person name="Brown S."/>
            <person name="Chillingworth T."/>
            <person name="Churcher C.M."/>
            <person name="Collins M."/>
            <person name="Connor R."/>
            <person name="Cronin A."/>
            <person name="Davis P."/>
            <person name="Feltwell T."/>
            <person name="Fraser A."/>
            <person name="Gentles S."/>
            <person name="Goble A."/>
            <person name="Hamlin N."/>
            <person name="Harris D.E."/>
            <person name="Hidalgo J."/>
            <person name="Hodgson G."/>
            <person name="Holroyd S."/>
            <person name="Hornsby T."/>
            <person name="Howarth S."/>
            <person name="Huckle E.J."/>
            <person name="Hunt S."/>
            <person name="Jagels K."/>
            <person name="James K.D."/>
            <person name="Jones L."/>
            <person name="Jones M."/>
            <person name="Leather S."/>
            <person name="McDonald S."/>
            <person name="McLean J."/>
            <person name="Mooney P."/>
            <person name="Moule S."/>
            <person name="Mungall K.L."/>
            <person name="Murphy L.D."/>
            <person name="Niblett D."/>
            <person name="Odell C."/>
            <person name="Oliver K."/>
            <person name="O'Neil S."/>
            <person name="Pearson D."/>
            <person name="Quail M.A."/>
            <person name="Rabbinowitsch E."/>
            <person name="Rutherford K.M."/>
            <person name="Rutter S."/>
            <person name="Saunders D."/>
            <person name="Seeger K."/>
            <person name="Sharp S."/>
            <person name="Skelton J."/>
            <person name="Simmonds M.N."/>
            <person name="Squares R."/>
            <person name="Squares S."/>
            <person name="Stevens K."/>
            <person name="Taylor K."/>
            <person name="Taylor R.G."/>
            <person name="Tivey A."/>
            <person name="Walsh S.V."/>
            <person name="Warren T."/>
            <person name="Whitehead S."/>
            <person name="Woodward J.R."/>
            <person name="Volckaert G."/>
            <person name="Aert R."/>
            <person name="Robben J."/>
            <person name="Grymonprez B."/>
            <person name="Weltjens I."/>
            <person name="Vanstreels E."/>
            <person name="Rieger M."/>
            <person name="Schaefer M."/>
            <person name="Mueller-Auer S."/>
            <person name="Gabel C."/>
            <person name="Fuchs M."/>
            <person name="Duesterhoeft A."/>
            <person name="Fritzc C."/>
            <person name="Holzer E."/>
            <person name="Moestl D."/>
            <person name="Hilbert H."/>
            <person name="Borzym K."/>
            <person name="Langer I."/>
            <person name="Beck A."/>
            <person name="Lehrach H."/>
            <person name="Reinhardt R."/>
            <person name="Pohl T.M."/>
            <person name="Eger P."/>
            <person name="Zimmermann W."/>
            <person name="Wedler H."/>
            <person name="Wambutt R."/>
            <person name="Purnelle B."/>
            <person name="Goffeau A."/>
            <person name="Cadieu E."/>
            <person name="Dreano S."/>
            <person name="Gloux S."/>
            <person name="Lelaure V."/>
            <person name="Mottier S."/>
            <person name="Galibert F."/>
            <person name="Aves S.J."/>
            <person name="Xiang Z."/>
            <person name="Hunt C."/>
            <person name="Moore K."/>
            <person name="Hurst S.M."/>
            <person name="Lucas M."/>
            <person name="Rochet M."/>
            <person name="Gaillardin C."/>
            <person name="Tallada V.A."/>
            <person name="Garzon A."/>
            <person name="Thode G."/>
            <person name="Daga R.R."/>
            <person name="Cruzado L."/>
            <person name="Jimenez J."/>
            <person name="Sanchez M."/>
            <person name="del Rey F."/>
            <person name="Benito J."/>
            <person name="Dominguez A."/>
            <person name="Revuelta J.L."/>
            <person name="Moreno S."/>
            <person name="Armstrong J."/>
            <person name="Forsburg S.L."/>
            <person name="Cerutti L."/>
            <person name="Lowe T."/>
            <person name="McCombie W.R."/>
            <person name="Paulsen I."/>
            <person name="Potashkin J."/>
            <person name="Shpakovski G.V."/>
            <person name="Ussery D."/>
            <person name="Barrell B.G."/>
            <person name="Nurse P."/>
        </authorList>
    </citation>
    <scope>NUCLEOTIDE SEQUENCE [LARGE SCALE GENOMIC DNA]</scope>
    <source>
        <strain>972 / ATCC 24843</strain>
    </source>
</reference>
<reference key="2">
    <citation type="journal article" date="2005" name="EMBO J.">
        <title>Homolog of BRCA2-interacting Dss1p and Uap56p link Mlo3p and Rae1p for mRNA export in fission yeast.</title>
        <authorList>
            <person name="Thakurta A.G."/>
            <person name="Gopal G."/>
            <person name="Yoon J.H."/>
            <person name="Kozak L."/>
            <person name="Dhar R."/>
        </authorList>
    </citation>
    <scope>FUNCTION</scope>
    <scope>INTERACTION WITH MLO3; RAE1; NUP98 AND NUP146</scope>
    <scope>SUBCELLULAR LOCATION</scope>
</reference>
<reference key="3">
    <citation type="journal article" date="2006" name="Biochem. J.">
        <title>Fission yeast Dss1 associates with the proteasome and is required for efficient ubiquitin-dependent proteolysis.</title>
        <authorList>
            <person name="Josse L."/>
            <person name="Harley M.E."/>
            <person name="Pires I.M."/>
            <person name="Hughes D.A."/>
        </authorList>
    </citation>
    <scope>FUNCTION</scope>
</reference>
<reference key="4">
    <citation type="journal article" date="2006" name="Nat. Biotechnol.">
        <title>ORFeome cloning and global analysis of protein localization in the fission yeast Schizosaccharomyces pombe.</title>
        <authorList>
            <person name="Matsuyama A."/>
            <person name="Arai R."/>
            <person name="Yashiroda Y."/>
            <person name="Shirai A."/>
            <person name="Kamata A."/>
            <person name="Sekido S."/>
            <person name="Kobayashi Y."/>
            <person name="Hashimoto A."/>
            <person name="Hamamoto M."/>
            <person name="Hiraoka Y."/>
            <person name="Horinouchi S."/>
            <person name="Yoshida M."/>
        </authorList>
    </citation>
    <scope>SUBCELLULAR LOCATION [LARGE SCALE ANALYSIS]</scope>
</reference>
<reference key="5">
    <citation type="journal article" date="2008" name="Biochem. Biophys. Res. Commun.">
        <title>Dss1 associating with the proteasome functions in selective nuclear mRNA export in yeast.</title>
        <authorList>
            <person name="Mannen T."/>
            <person name="Andoh T."/>
            <person name="Tani T."/>
        </authorList>
    </citation>
    <scope>FUNCTION</scope>
</reference>
<reference key="6">
    <citation type="journal article" date="2010" name="J. Biol. Chem.">
        <title>Schizosaccharomyces pombe Dss1p is a DNA damage checkpoint protein that recruits Rad24p, Cdc25p, and Rae1p to DNA double-strand breaks.</title>
        <authorList>
            <person name="Selvanathan S.P."/>
            <person name="Thakurta A.G."/>
            <person name="Dhakshnamoorthy J."/>
            <person name="Zhou M."/>
            <person name="Veenstra T.D."/>
            <person name="Dhar R."/>
        </authorList>
    </citation>
    <scope>FUNCTION</scope>
    <scope>INTERACTION WITH RAD24</scope>
</reference>
<reference key="7">
    <citation type="journal article" date="2014" name="Mol. Cell">
        <title>Dss1 is a 26S proteasome ubiquitin receptor.</title>
        <authorList>
            <person name="Paraskevopoulos K."/>
            <person name="Kriegenburg F."/>
            <person name="Tatham M.H."/>
            <person name="Roesner H.I."/>
            <person name="Medina B."/>
            <person name="Larsen I.B."/>
            <person name="Brandstrup R."/>
            <person name="Hardwick K.G."/>
            <person name="Hay R.T."/>
            <person name="Kragelund B.B."/>
            <person name="Hartmann-Petersen R."/>
            <person name="Gordon C."/>
        </authorList>
    </citation>
    <scope>FUNCTION</scope>
    <scope>INTERACTION WITH UBIQUITIN</scope>
    <scope>DOMAIN</scope>
</reference>
<proteinExistence type="evidence at protein level"/>
<gene>
    <name type="primary">rpn15</name>
    <name evidence="7" type="synonym">dss1</name>
    <name type="synonym">sem1</name>
    <name evidence="10" type="ORF">SPAC3G6.02</name>
</gene>
<keyword id="KW-0963">Cytoplasm</keyword>
<keyword id="KW-0509">mRNA transport</keyword>
<keyword id="KW-0539">Nucleus</keyword>
<keyword id="KW-1185">Reference proteome</keyword>
<keyword id="KW-0813">Transport</keyword>
<protein>
    <recommendedName>
        <fullName>26S proteasome complex subunit rpn15</fullName>
    </recommendedName>
    <alternativeName>
        <fullName evidence="7">mRNA export factor dss1</fullName>
    </alternativeName>
</protein>
<sequence length="71" mass="8111">MSRAALPSLENLEDDDEFEDFATENWPMKDTELDTGDDTLWENNWDDEDIGDDDFSVQLQAELKKKGVAAN</sequence>
<organism>
    <name type="scientific">Schizosaccharomyces pombe (strain 972 / ATCC 24843)</name>
    <name type="common">Fission yeast</name>
    <dbReference type="NCBI Taxonomy" id="284812"/>
    <lineage>
        <taxon>Eukaryota</taxon>
        <taxon>Fungi</taxon>
        <taxon>Dikarya</taxon>
        <taxon>Ascomycota</taxon>
        <taxon>Taphrinomycotina</taxon>
        <taxon>Schizosaccharomycetes</taxon>
        <taxon>Schizosaccharomycetales</taxon>
        <taxon>Schizosaccharomycetaceae</taxon>
        <taxon>Schizosaccharomyces</taxon>
    </lineage>
</organism>
<dbReference type="EMBL" id="CU329670">
    <property type="protein sequence ID" value="CAB16278.1"/>
    <property type="molecule type" value="Genomic_DNA"/>
</dbReference>
<dbReference type="PIR" id="T38721">
    <property type="entry name" value="T38721"/>
</dbReference>
<dbReference type="RefSeq" id="NP_594968.1">
    <property type="nucleotide sequence ID" value="NM_001020399.2"/>
</dbReference>
<dbReference type="SMR" id="O14140"/>
<dbReference type="BioGRID" id="279492">
    <property type="interactions" value="331"/>
</dbReference>
<dbReference type="ComplexPortal" id="CPX-9077">
    <property type="entry name" value="26S proteasome complex"/>
</dbReference>
<dbReference type="FunCoup" id="O14140">
    <property type="interactions" value="76"/>
</dbReference>
<dbReference type="IntAct" id="O14140">
    <property type="interactions" value="7"/>
</dbReference>
<dbReference type="STRING" id="284812.O14140"/>
<dbReference type="PaxDb" id="4896-SPAC3G6.02.1"/>
<dbReference type="EnsemblFungi" id="SPAC3G6.02.1">
    <property type="protein sequence ID" value="SPAC3G6.02.1:pep"/>
    <property type="gene ID" value="SPAC3G6.02"/>
</dbReference>
<dbReference type="GeneID" id="2543058"/>
<dbReference type="KEGG" id="spo:2543058"/>
<dbReference type="PomBase" id="SPAC3G6.02">
    <property type="gene designation" value="rpn15"/>
</dbReference>
<dbReference type="VEuPathDB" id="FungiDB:SPAC3G6.02"/>
<dbReference type="eggNOG" id="KOG4764">
    <property type="taxonomic scope" value="Eukaryota"/>
</dbReference>
<dbReference type="HOGENOM" id="CLU_141774_1_0_1"/>
<dbReference type="InParanoid" id="O14140"/>
<dbReference type="OMA" id="TLWENNW"/>
<dbReference type="PRO" id="PR:O14140"/>
<dbReference type="Proteomes" id="UP000002485">
    <property type="component" value="Chromosome I"/>
</dbReference>
<dbReference type="GO" id="GO:0005737">
    <property type="term" value="C:cytoplasm"/>
    <property type="evidence" value="ECO:0000314"/>
    <property type="project" value="PomBase"/>
</dbReference>
<dbReference type="GO" id="GO:0005829">
    <property type="term" value="C:cytosol"/>
    <property type="evidence" value="ECO:0000314"/>
    <property type="project" value="PomBase"/>
</dbReference>
<dbReference type="GO" id="GO:0005634">
    <property type="term" value="C:nucleus"/>
    <property type="evidence" value="ECO:0000314"/>
    <property type="project" value="PomBase"/>
</dbReference>
<dbReference type="GO" id="GO:0000502">
    <property type="term" value="C:proteasome complex"/>
    <property type="evidence" value="ECO:0000318"/>
    <property type="project" value="GO_Central"/>
</dbReference>
<dbReference type="GO" id="GO:0008541">
    <property type="term" value="C:proteasome regulatory particle, lid subcomplex"/>
    <property type="evidence" value="ECO:0000314"/>
    <property type="project" value="PomBase"/>
</dbReference>
<dbReference type="GO" id="GO:0060090">
    <property type="term" value="F:molecular adaptor activity"/>
    <property type="evidence" value="ECO:0000269"/>
    <property type="project" value="DisProt"/>
</dbReference>
<dbReference type="GO" id="GO:0000724">
    <property type="term" value="P:double-strand break repair via homologous recombination"/>
    <property type="evidence" value="ECO:0000318"/>
    <property type="project" value="GO_Central"/>
</dbReference>
<dbReference type="GO" id="GO:0006406">
    <property type="term" value="P:mRNA export from nucleus"/>
    <property type="evidence" value="ECO:0007669"/>
    <property type="project" value="InterPro"/>
</dbReference>
<dbReference type="GO" id="GO:0043248">
    <property type="term" value="P:proteasome assembly"/>
    <property type="evidence" value="ECO:0000266"/>
    <property type="project" value="PomBase"/>
</dbReference>
<dbReference type="CDD" id="cd13768">
    <property type="entry name" value="DSS1_Sem1"/>
    <property type="match status" value="1"/>
</dbReference>
<dbReference type="DisProt" id="DP01191"/>
<dbReference type="InterPro" id="IPR007834">
    <property type="entry name" value="DSS1_SEM1"/>
</dbReference>
<dbReference type="PANTHER" id="PTHR16771">
    <property type="entry name" value="26 PROTEASOME COMPLEX SUBUNIT DSS1"/>
    <property type="match status" value="1"/>
</dbReference>
<dbReference type="PANTHER" id="PTHR16771:SF0">
    <property type="entry name" value="26S PROTEASOME COMPLEX SUBUNIT SEM1"/>
    <property type="match status" value="1"/>
</dbReference>
<dbReference type="Pfam" id="PF05160">
    <property type="entry name" value="DSS1_SEM1"/>
    <property type="match status" value="1"/>
</dbReference>
<dbReference type="SMART" id="SM01385">
    <property type="entry name" value="DSS1_SEM1"/>
    <property type="match status" value="1"/>
</dbReference>
<feature type="chain" id="PRO_0000122969" description="26S proteasome complex subunit rpn15">
    <location>
        <begin position="1"/>
        <end position="71"/>
    </location>
</feature>
<feature type="region of interest" description="Disordered" evidence="1">
    <location>
        <begin position="1"/>
        <end position="38"/>
    </location>
</feature>
<feature type="region of interest" description="UBS-II" evidence="9">
    <location>
        <begin position="16"/>
        <end position="25"/>
    </location>
</feature>
<feature type="region of interest" description="UBS-I" evidence="9">
    <location>
        <begin position="38"/>
        <end position="49"/>
    </location>
</feature>
<feature type="compositionally biased region" description="Acidic residues" evidence="1">
    <location>
        <begin position="11"/>
        <end position="22"/>
    </location>
</feature>
<accession>O14140</accession>
<comment type="function">
    <text evidence="2 3 4 5 6">Versatile protein that might stabilize multiple protein complexes involved in diverse pathways. Subunit of the 26S proteasome which plays a role in ubiquitin-dependent proteolysis (PubMed:16149916). Acts as a ubiquitin receptor of the 26S proteasome, by interacting with ubiquitin chains linked by 'Lys-63' and 'Lys-48' (PubMed:25306921). Involved in nuclear export of specific sets of mRNAs (PubMed:18023413). Links the mRNA adapter mlo3 to rae1 for targeting mRNA-protein complex to the proteins of the nucleoporin complex (NPC) (PubMed:15990877). Involved in recombinational repair of DNA. Plays a critical role in linking repair and checkpoint factors to damaged DNA sites by specifically recruiting rad24 and cdc25 to the DSBs (PubMed:20231270).</text>
</comment>
<comment type="subunit">
    <text evidence="2 5 6">Interacts with mlo3, rae1, nup98/nup189 and nup146 (PubMed:15990877). Interacts with rad24 (PubMed:20231270). Interacts (via UBSs) with ubiquitin (ubi3/ubi5) (PubMed:25306921).</text>
</comment>
<comment type="subcellular location">
    <subcellularLocation>
        <location>Cytoplasm</location>
    </subcellularLocation>
    <subcellularLocation>
        <location>Nucleus</location>
    </subcellularLocation>
</comment>
<comment type="domain">
    <text evidence="9">Two unstructured ubiquitin-binding sites (UBSs) mediate interaction with ubiquitin. UBS-I is the strong and UBS-II the weak binding site.</text>
</comment>
<comment type="similarity">
    <text evidence="8">Belongs to the DSS1/SEM1 family.</text>
</comment>